<name>ARCH_PYRAB</name>
<proteinExistence type="evidence at protein level"/>
<keyword id="KW-0106">Calcium</keyword>
<keyword id="KW-0479">Metal-binding</keyword>
<keyword id="KW-0819">tRNA processing</keyword>
<comment type="function">
    <text evidence="1 2">Activates the tRNA-splicing ligase complex by facilitating the enzymatic turnover of catalytic subunit RtcB. Acts by promoting the guanylylation of RtcB, a key intermediate step in tRNA ligation. Can also alter the NTP specificity of RtcB such that ATP, dGTP or ITP is used efficiently (By similarity). Chaperone or modulator of proteins involved in DNA or RNA processing. Protects the tRNA (cytosine-5-)-methyltransferase PAB1947 against aggregation and increases its specificity.</text>
</comment>
<comment type="subunit">
    <text evidence="2">In solution, exists as a monomer, trimer and hexamer. Oligomeric states form a tripartite complex with tRNA and PAB1947 methyltransferase.</text>
</comment>
<comment type="similarity">
    <text evidence="3">Belongs to the archease family.</text>
</comment>
<feature type="chain" id="PRO_0000068847" description="Protein archease">
    <location>
        <begin position="1"/>
        <end position="142"/>
    </location>
</feature>
<feature type="binding site" evidence="1">
    <location>
        <position position="12"/>
    </location>
    <ligand>
        <name>Ca(2+)</name>
        <dbReference type="ChEBI" id="CHEBI:29108"/>
    </ligand>
</feature>
<feature type="binding site" evidence="1">
    <location>
        <position position="141"/>
    </location>
    <ligand>
        <name>Ca(2+)</name>
        <dbReference type="ChEBI" id="CHEBI:29108"/>
    </ligand>
</feature>
<feature type="binding site" evidence="1">
    <location>
        <position position="142"/>
    </location>
    <ligand>
        <name>Ca(2+)</name>
        <dbReference type="ChEBI" id="CHEBI:29108"/>
    </ligand>
</feature>
<sequence length="142" mass="16590">MKRWEHYEHTADIGIRGYGDSLEEAFEAVAIALFDVIVNVNKVEKKEVREVEVEGEDLESLLYNFLEELLVIHDIEGLVFRDFEVKIEKTEKGYKLKAKAYGEKLDPEKHEPKEEVKAITYHDMKIEKLPDGRWMAQLVPDI</sequence>
<organism>
    <name type="scientific">Pyrococcus abyssi (strain GE5 / Orsay)</name>
    <dbReference type="NCBI Taxonomy" id="272844"/>
    <lineage>
        <taxon>Archaea</taxon>
        <taxon>Methanobacteriati</taxon>
        <taxon>Methanobacteriota</taxon>
        <taxon>Thermococci</taxon>
        <taxon>Thermococcales</taxon>
        <taxon>Thermococcaceae</taxon>
        <taxon>Pyrococcus</taxon>
    </lineage>
</organism>
<gene>
    <name type="ordered locus">PYRAB06240</name>
    <name type="ORF">PAB1946</name>
</gene>
<dbReference type="EMBL" id="AJ248284">
    <property type="protein sequence ID" value="CAB49546.1"/>
    <property type="molecule type" value="Genomic_DNA"/>
</dbReference>
<dbReference type="EMBL" id="HE613800">
    <property type="protein sequence ID" value="CCE70018.1"/>
    <property type="molecule type" value="Genomic_DNA"/>
</dbReference>
<dbReference type="PIR" id="C75183">
    <property type="entry name" value="C75183"/>
</dbReference>
<dbReference type="RefSeq" id="WP_010867748.1">
    <property type="nucleotide sequence ID" value="NC_000868.1"/>
</dbReference>
<dbReference type="SMR" id="Q9V105"/>
<dbReference type="STRING" id="272844.PAB1946"/>
<dbReference type="KEGG" id="pab:PAB1946"/>
<dbReference type="PATRIC" id="fig|272844.11.peg.664"/>
<dbReference type="eggNOG" id="arCOG04055">
    <property type="taxonomic scope" value="Archaea"/>
</dbReference>
<dbReference type="HOGENOM" id="CLU_111362_3_0_2"/>
<dbReference type="OrthoDB" id="8831at2157"/>
<dbReference type="PhylomeDB" id="Q9V105"/>
<dbReference type="Proteomes" id="UP000000810">
    <property type="component" value="Chromosome"/>
</dbReference>
<dbReference type="Proteomes" id="UP000009139">
    <property type="component" value="Chromosome"/>
</dbReference>
<dbReference type="GO" id="GO:0005509">
    <property type="term" value="F:calcium ion binding"/>
    <property type="evidence" value="ECO:0007669"/>
    <property type="project" value="UniProtKB-UniRule"/>
</dbReference>
<dbReference type="GO" id="GO:0006388">
    <property type="term" value="P:tRNA splicing, via endonucleolytic cleavage and ligation"/>
    <property type="evidence" value="ECO:0007669"/>
    <property type="project" value="UniProtKB-UniRule"/>
</dbReference>
<dbReference type="FunFam" id="3.55.10.10:FF:000002">
    <property type="entry name" value="Archease, putative"/>
    <property type="match status" value="1"/>
</dbReference>
<dbReference type="Gene3D" id="3.55.10.10">
    <property type="entry name" value="Archease domain"/>
    <property type="match status" value="1"/>
</dbReference>
<dbReference type="HAMAP" id="MF_01222">
    <property type="entry name" value="Archease_arch"/>
    <property type="match status" value="1"/>
</dbReference>
<dbReference type="InterPro" id="IPR002804">
    <property type="entry name" value="Archease"/>
</dbReference>
<dbReference type="InterPro" id="IPR022952">
    <property type="entry name" value="Archease_arc"/>
</dbReference>
<dbReference type="InterPro" id="IPR023572">
    <property type="entry name" value="Archease_dom"/>
</dbReference>
<dbReference type="InterPro" id="IPR036820">
    <property type="entry name" value="Archease_dom_sf"/>
</dbReference>
<dbReference type="NCBIfam" id="NF001617">
    <property type="entry name" value="PRK00407.1"/>
    <property type="match status" value="1"/>
</dbReference>
<dbReference type="PANTHER" id="PTHR12682">
    <property type="entry name" value="ARCHEASE"/>
    <property type="match status" value="1"/>
</dbReference>
<dbReference type="PANTHER" id="PTHR12682:SF11">
    <property type="entry name" value="PROTEIN ARCHEASE"/>
    <property type="match status" value="1"/>
</dbReference>
<dbReference type="Pfam" id="PF01951">
    <property type="entry name" value="Archease"/>
    <property type="match status" value="1"/>
</dbReference>
<dbReference type="SUPFAM" id="SSF69819">
    <property type="entry name" value="MTH1598-like"/>
    <property type="match status" value="1"/>
</dbReference>
<accession>Q9V105</accession>
<accession>G8ZJ91</accession>
<evidence type="ECO:0000250" key="1"/>
<evidence type="ECO:0000269" key="2">
    <source>
    </source>
</evidence>
<evidence type="ECO:0000305" key="3"/>
<reference key="1">
    <citation type="journal article" date="2003" name="Mol. Microbiol.">
        <title>An integrated analysis of the genome of the hyperthermophilic archaeon Pyrococcus abyssi.</title>
        <authorList>
            <person name="Cohen G.N."/>
            <person name="Barbe V."/>
            <person name="Flament D."/>
            <person name="Galperin M."/>
            <person name="Heilig R."/>
            <person name="Lecompte O."/>
            <person name="Poch O."/>
            <person name="Prieur D."/>
            <person name="Querellou J."/>
            <person name="Ripp R."/>
            <person name="Thierry J.-C."/>
            <person name="Van der Oost J."/>
            <person name="Weissenbach J."/>
            <person name="Zivanovic Y."/>
            <person name="Forterre P."/>
        </authorList>
    </citation>
    <scope>NUCLEOTIDE SEQUENCE [LARGE SCALE GENOMIC DNA]</scope>
    <source>
        <strain>GE5 / Orsay</strain>
    </source>
</reference>
<reference key="2">
    <citation type="journal article" date="2012" name="Curr. Microbiol.">
        <title>Re-annotation of two hyperthermophilic archaea Pyrococcus abyssi GE5 and Pyrococcus furiosus DSM 3638.</title>
        <authorList>
            <person name="Gao J."/>
            <person name="Wang J."/>
        </authorList>
    </citation>
    <scope>GENOME REANNOTATION</scope>
    <source>
        <strain>GE5 / Orsay</strain>
    </source>
</reference>
<reference key="3">
    <citation type="journal article" date="2007" name="J. Biol. Chem.">
        <title>Archease from Pyrococcus abyssi improves substrate specificity and solubility of a tRNA m5C methyltransferase.</title>
        <authorList>
            <person name="Auxilien S."/>
            <person name="El Khadali F."/>
            <person name="Rasmussen A."/>
            <person name="Douthwaite S."/>
            <person name="Grosjean H."/>
        </authorList>
    </citation>
    <scope>FUNCTION AS A CHAPERONE</scope>
    <scope>SUBUNIT</scope>
</reference>
<protein>
    <recommendedName>
        <fullName>Protein archease</fullName>
    </recommendedName>
    <alternativeName>
        <fullName>tRNA m5C methyltransferase chaperone</fullName>
    </alternativeName>
</protein>